<protein>
    <recommendedName>
        <fullName evidence="30">DNA-dependent metalloprotease SPRTN</fullName>
        <ecNumber evidence="17 18 19 23">3.4.24.-</ecNumber>
    </recommendedName>
    <alternativeName>
        <fullName evidence="29">DNA damage protein targeting VCP</fullName>
        <shortName evidence="29">DVC1</shortName>
    </alternativeName>
    <alternativeName>
        <fullName evidence="28">Protein with SprT-like domain at the N terminus</fullName>
        <shortName evidence="28">Spartan</shortName>
    </alternativeName>
</protein>
<feature type="chain" id="PRO_0000312748" description="DNA-dependent metalloprotease SPRTN">
    <location>
        <begin position="1"/>
        <end position="489"/>
    </location>
</feature>
<feature type="domain" description="SprT-like" evidence="2">
    <location>
        <begin position="45"/>
        <end position="212"/>
    </location>
</feature>
<feature type="zinc finger region" description="UBZ4-type" evidence="3">
    <location>
        <begin position="453"/>
        <end position="480"/>
    </location>
</feature>
<feature type="region of interest" description="Disordered" evidence="5">
    <location>
        <begin position="357"/>
        <end position="409"/>
    </location>
</feature>
<feature type="region of interest" description="Disordered" evidence="5">
    <location>
        <begin position="428"/>
        <end position="453"/>
    </location>
</feature>
<feature type="short sequence motif" description="SHP-box" evidence="13">
    <location>
        <begin position="253"/>
        <end position="261"/>
    </location>
</feature>
<feature type="short sequence motif" description="PIP-box" evidence="9 13 14 16">
    <location>
        <begin position="325"/>
        <end position="332"/>
    </location>
</feature>
<feature type="short sequence motif" description="Nuclear localization signal" evidence="17">
    <location>
        <begin position="402"/>
        <end position="413"/>
    </location>
</feature>
<feature type="compositionally biased region" description="Low complexity" evidence="5">
    <location>
        <begin position="363"/>
        <end position="383"/>
    </location>
</feature>
<feature type="compositionally biased region" description="Polar residues" evidence="5">
    <location>
        <begin position="384"/>
        <end position="403"/>
    </location>
</feature>
<feature type="compositionally biased region" description="Low complexity" evidence="5">
    <location>
        <begin position="437"/>
        <end position="451"/>
    </location>
</feature>
<feature type="active site" evidence="4 17 18 19 20">
    <location>
        <position position="112"/>
    </location>
</feature>
<feature type="binding site" evidence="4 20 33 34">
    <location>
        <position position="111"/>
    </location>
    <ligand>
        <name>Zn(2+)</name>
        <dbReference type="ChEBI" id="CHEBI:29105"/>
        <label>1</label>
        <note>catalytic</note>
    </ligand>
</feature>
<feature type="binding site" evidence="4 20 33 34">
    <location>
        <position position="115"/>
    </location>
    <ligand>
        <name>Zn(2+)</name>
        <dbReference type="ChEBI" id="CHEBI:29105"/>
        <label>1</label>
        <note>catalytic</note>
    </ligand>
</feature>
<feature type="binding site" evidence="20 33 34">
    <location>
        <position position="130"/>
    </location>
    <ligand>
        <name>Zn(2+)</name>
        <dbReference type="ChEBI" id="CHEBI:29105"/>
        <label>1</label>
        <note>catalytic</note>
    </ligand>
</feature>
<feature type="binding site" evidence="3">
    <location>
        <position position="456"/>
    </location>
    <ligand>
        <name>Zn(2+)</name>
        <dbReference type="ChEBI" id="CHEBI:29105"/>
        <label>2</label>
    </ligand>
</feature>
<feature type="binding site" evidence="3">
    <location>
        <position position="459"/>
    </location>
    <ligand>
        <name>Zn(2+)</name>
        <dbReference type="ChEBI" id="CHEBI:29105"/>
        <label>2</label>
    </ligand>
</feature>
<feature type="binding site" evidence="3">
    <location>
        <position position="471"/>
    </location>
    <ligand>
        <name>Zn(2+)</name>
        <dbReference type="ChEBI" id="CHEBI:29105"/>
        <label>2</label>
    </ligand>
</feature>
<feature type="binding site" evidence="3">
    <location>
        <position position="475"/>
    </location>
    <ligand>
        <name>Zn(2+)</name>
        <dbReference type="ChEBI" id="CHEBI:29105"/>
        <label>2</label>
    </ligand>
</feature>
<feature type="site" description="Cleavage; by autolysis" evidence="20">
    <location>
        <begin position="227"/>
        <end position="228"/>
    </location>
</feature>
<feature type="modified residue" description="N-acetylmethionine" evidence="35">
    <location>
        <position position="1"/>
    </location>
</feature>
<feature type="modified residue" description="N6-acetyllysine" evidence="23">
    <location>
        <position position="230"/>
    </location>
</feature>
<feature type="modified residue" description="Phosphoserine" evidence="36">
    <location>
        <position position="268"/>
    </location>
</feature>
<feature type="modified residue" description="Phosphoserine; by CHEK1" evidence="21">
    <location>
        <position position="373"/>
    </location>
</feature>
<feature type="modified residue" description="Phosphoserine; by CHEK1" evidence="21">
    <location>
        <position position="374"/>
    </location>
</feature>
<feature type="modified residue" description="Phosphoserine; by CHEK1" evidence="21">
    <location>
        <position position="383"/>
    </location>
</feature>
<feature type="cross-link" description="Glycyl lysine isopeptide (Lys-Gly) (interchain with G-Cter in SUMO2)" evidence="39">
    <location>
        <position position="303"/>
    </location>
</feature>
<feature type="cross-link" description="Glycyl lysine isopeptide (Lys-Gly) (interchain with G-Cter in SUMO2); alternate" evidence="39">
    <location>
        <position position="341"/>
    </location>
</feature>
<feature type="cross-link" description="Glycyl lysine isopeptide (Lys-Gly) (interchain with G-Cter in ubiquitin); alternate" evidence="18">
    <location>
        <position position="341"/>
    </location>
</feature>
<feature type="cross-link" description="Glycyl lysine isopeptide (Lys-Gly) (interchain with G-Cter in SUMO2)" evidence="39">
    <location>
        <position position="361"/>
    </location>
</feature>
<feature type="cross-link" description="Glycyl lysine isopeptide (Lys-Gly) (interchain with G-Cter in SUMO2); alternate" evidence="39">
    <location>
        <position position="376"/>
    </location>
</feature>
<feature type="cross-link" description="Glycyl lysine isopeptide (Lys-Gly) (interchain with G-Cter in ubiquitin); alternate" evidence="18">
    <location>
        <position position="376"/>
    </location>
</feature>
<feature type="cross-link" description="Glycyl lysine isopeptide (Lys-Gly) (interchain with G-Cter in ubiquitin)" evidence="18">
    <location>
        <position position="414"/>
    </location>
</feature>
<feature type="cross-link" description="Glycyl lysine isopeptide (Lys-Gly) (interchain with G-Cter in SUMO2)" evidence="38 39">
    <location>
        <position position="423"/>
    </location>
</feature>
<feature type="cross-link" description="Glycyl lysine isopeptide (Lys-Gly) (interchain with G-Cter in SUMO2)" evidence="39">
    <location>
        <position position="424"/>
    </location>
</feature>
<feature type="cross-link" description="Glycyl lysine isopeptide (Lys-Gly) (interchain with G-Cter in ubiquitin)" evidence="18">
    <location>
        <position position="435"/>
    </location>
</feature>
<feature type="cross-link" description="Glycyl lysine isopeptide (Lys-Gly) (interchain with G-Cter in SUMO2)" evidence="37">
    <location>
        <position position="484"/>
    </location>
</feature>
<feature type="splice variant" id="VSP_046925" description="In isoform 3." evidence="26">
    <location>
        <begin position="108"/>
        <end position="150"/>
    </location>
</feature>
<feature type="splice variant" id="VSP_029891" description="In isoform 2 and isoform 3." evidence="25 26 27">
    <original>DKPNRGEAQLV</original>
    <variation>GTFVYILLIFM</variation>
    <location>
        <begin position="240"/>
        <end position="250"/>
    </location>
</feature>
<feature type="splice variant" id="VSP_029892" description="In isoform 2 and isoform 3." evidence="25 26 27">
    <location>
        <begin position="251"/>
        <end position="489"/>
    </location>
</feature>
<feature type="sequence variant" id="VAR_072708" description="In RJALS; impaired metalloprotease activity and ability to cleave covalent DNA-protein cross-links (DPCs); cells are completely unable to restore DNA replication fork progression; dbSNP:rs527236213." evidence="15 17 18 19">
    <original>Y</original>
    <variation>C</variation>
    <location>
        <position position="117"/>
    </location>
</feature>
<feature type="sequence variant" id="VAR_037556" description="In dbSNP:rs2437150." evidence="6 7 8">
    <original>P</original>
    <variation>L</variation>
    <location>
        <position position="296"/>
    </location>
</feature>
<feature type="mutagenesis site" description="Abolished ability to mediate autocleavage. Does not affect DNA-binding." evidence="20">
    <original>R</original>
    <variation>E</variation>
    <location>
        <position position="71"/>
    </location>
</feature>
<feature type="mutagenesis site" description="Abolished ability to mediate autocleavage. Does not affect DNA-binding." evidence="20">
    <original>R</original>
    <variation>E</variation>
    <location>
        <position position="91"/>
    </location>
</feature>
<feature type="mutagenesis site" description="Abolished metalloprotease activity and ability to cleave covalent DNA-protein cross-links (DPCs). Abolished ability to cleave CHEK1 during physiological DNA replication." evidence="18 19 20 21">
    <original>E</original>
    <variation>A</variation>
    <variation>Q</variation>
    <location>
        <position position="112"/>
    </location>
</feature>
<feature type="mutagenesis site" description="Abolished ability to mediate autocleavage in presence of ssDNA." evidence="20">
    <original>I</original>
    <variation>A</variation>
    <location>
        <position position="149"/>
    </location>
</feature>
<feature type="mutagenesis site" description="Abolished ability to mediate autocleavage in presence of ssDNA." evidence="20">
    <original>H</original>
    <variation>A</variation>
    <location>
        <position position="153"/>
    </location>
</feature>
<feature type="mutagenesis site" description="Abolished ability to mediate autocleavage in presence of ssDNA." evidence="20">
    <original>F</original>
    <variation>A</variation>
    <location>
        <position position="155"/>
    </location>
</feature>
<feature type="mutagenesis site" description="Abolished ability to mediate autocleavage in presence of ssDNA." evidence="20">
    <original>H</original>
    <variation>A</variation>
    <location>
        <position position="156"/>
    </location>
</feature>
<feature type="mutagenesis site" description="Increased ability to mediate autocleavage." evidence="20">
    <original>D</original>
    <variation>K</variation>
    <location>
        <position position="157"/>
    </location>
</feature>
<feature type="mutagenesis site" description="Abolished ability to mediate autocleavage in presence of ssDNA." evidence="20">
    <original>V</original>
    <variation>A</variation>
    <location>
        <position position="159"/>
    </location>
</feature>
<feature type="mutagenesis site" description="Abolished ability to mediate autocleavage. Strongly reduced DNA-binding." evidence="20">
    <original>R</original>
    <variation>E</variation>
    <location>
        <position position="163"/>
    </location>
</feature>
<feature type="mutagenesis site" description="Abolished metalloprotease activity and ability to mediate autocleavage. Slightly impaired ability to cleave covalent DNA-protein cross-links (DPCs)." evidence="20">
    <original>Y</original>
    <variation>A</variation>
    <location>
        <position position="179"/>
    </location>
</feature>
<feature type="mutagenesis site" description="Abolished metalloprotease activity and ability to cleave covalent DNA-protein cross-links (DPCs)." evidence="20">
    <original>R</original>
    <variation>A</variation>
    <location>
        <position position="185"/>
    </location>
</feature>
<feature type="mutagenesis site" description="Abolished ability to mediate autocleavage. Strongly reduced DNA-binding." evidence="20">
    <original>R</original>
    <variation>E</variation>
    <location>
        <position position="189"/>
    </location>
</feature>
<feature type="mutagenesis site" description="Strongly reduced ability to mediate autocleavage. Strongly reduced DNA-binding." evidence="20">
    <original>H</original>
    <variation>E</variation>
    <location>
        <position position="194"/>
    </location>
</feature>
<feature type="mutagenesis site" description="Abolished metalloprotease activity, ability to cleave covalent DNA-protein cross-links (DPCs) and to mediate autocleavage." evidence="20">
    <original>W</original>
    <variation>A</variation>
    <location>
        <position position="197"/>
    </location>
</feature>
<feature type="mutagenesis site" description="Strongly reduced ability to mediate autocleavage. Strongly reduced DNA-binding." evidence="20">
    <original>K</original>
    <variation>E</variation>
    <location>
        <position position="211"/>
    </location>
</feature>
<feature type="mutagenesis site" description="Mimics acetylation, promoting cleavage of covalent DNA-protein cross-links (DPCs)." evidence="23">
    <original>K</original>
    <variation>Q</variation>
    <location>
        <position position="230"/>
    </location>
</feature>
<feature type="mutagenesis site" description="Abolished acetylation, leading to impaired localization to chromatin." evidence="23">
    <original>K</original>
    <variation>R</variation>
    <location>
        <position position="230"/>
    </location>
</feature>
<feature type="mutagenesis site" description="Abolishes binding to VCP/p97; when associated with A-260." evidence="13">
    <original>F</original>
    <variation>A</variation>
    <location>
        <position position="253"/>
    </location>
</feature>
<feature type="mutagenesis site" description="Abolishes binding to VCP/p97; when associated with A-253." evidence="13">
    <original>L</original>
    <variation>A</variation>
    <location>
        <position position="260"/>
    </location>
</feature>
<feature type="mutagenesis site" description="Abolished interaction with PCNA." evidence="14">
    <original>QNVLSNYF</original>
    <variation>ANVASNAA</variation>
    <location>
        <begin position="325"/>
        <end position="332"/>
    </location>
</feature>
<feature type="mutagenesis site" description="Decreased interaction with PCNA." evidence="16">
    <original>N</original>
    <variation>V</variation>
    <location>
        <position position="326"/>
    </location>
</feature>
<feature type="mutagenesis site" description="Abolished interaction with PCNA." evidence="10 13">
    <original>YF</original>
    <variation>AA</variation>
    <location>
        <begin position="331"/>
        <end position="332"/>
    </location>
</feature>
<feature type="mutagenesis site" description="Abolished interaction with PCNA." evidence="16">
    <original>YF</original>
    <variation>FY</variation>
    <location>
        <begin position="331"/>
        <end position="332"/>
    </location>
</feature>
<feature type="mutagenesis site" description="Abolished interaction with PCNA." evidence="16">
    <original>Y</original>
    <variation>F</variation>
    <location>
        <position position="331"/>
    </location>
</feature>
<feature type="mutagenesis site" description="Abolished interaction with PCNA." evidence="16">
    <original>F</original>
    <variation>Y</variation>
    <location>
        <position position="332"/>
    </location>
</feature>
<feature type="mutagenesis site" description="Does not abolish monoubiquitination; when associated with R-376, R-414 and R-435." evidence="18">
    <original>K</original>
    <variation>R</variation>
    <location>
        <position position="341"/>
    </location>
</feature>
<feature type="mutagenesis site" description="Abolished phosphorylation by CHEK1; when associated with A-374 and A-383." evidence="21">
    <original>S</original>
    <variation>A</variation>
    <location>
        <position position="373"/>
    </location>
</feature>
<feature type="mutagenesis site" description="Abolished phosphorylation by CHEK1; when associated with A-373 and A-383." evidence="21">
    <original>S</original>
    <variation>A</variation>
    <location>
        <position position="374"/>
    </location>
</feature>
<feature type="mutagenesis site" description="Does not abolish monoubiquitination; when associated with R-341, R-414 and R-435." evidence="18">
    <original>K</original>
    <variation>R</variation>
    <location>
        <position position="376"/>
    </location>
</feature>
<feature type="mutagenesis site" description="Abolished phosphorylation by CHEK1; when associated with A-373 and A-374." evidence="21">
    <original>S</original>
    <variation>A</variation>
    <location>
        <position position="383"/>
    </location>
</feature>
<feature type="mutagenesis site" description="Promotes relocalization to the cytoplasm." evidence="17">
    <original>RPRL</original>
    <variation>APRA</variation>
    <location>
        <begin position="408"/>
        <end position="411"/>
    </location>
</feature>
<feature type="mutagenesis site" description="Does not abolish monoubiquitination; when associated with R-341, R-376 and R-435." evidence="18">
    <original>K</original>
    <variation>R</variation>
    <location>
        <position position="414"/>
    </location>
</feature>
<feature type="mutagenesis site" description="Does not abolish monoubiquitination; when associated with R-341, R-376 and R-414." evidence="18">
    <original>K</original>
    <variation>R</variation>
    <location>
        <position position="435"/>
    </location>
</feature>
<feature type="mutagenesis site" description="Abolishes binding to ubiquitin." evidence="9 13 14">
    <original>CPVC</original>
    <variation>APVA</variation>
    <location>
        <begin position="456"/>
        <end position="459"/>
    </location>
</feature>
<feature type="mutagenesis site" description="Abolishes binding to ubiquitin." evidence="10">
    <original>D</original>
    <variation>A</variation>
    <location>
        <position position="473"/>
    </location>
</feature>
<feature type="turn" evidence="41">
    <location>
        <begin position="34"/>
        <end position="37"/>
    </location>
</feature>
<feature type="helix" evidence="41">
    <location>
        <begin position="45"/>
        <end position="56"/>
    </location>
</feature>
<feature type="turn" evidence="41">
    <location>
        <begin position="58"/>
        <end position="63"/>
    </location>
</feature>
<feature type="strand" evidence="41">
    <location>
        <begin position="65"/>
        <end position="71"/>
    </location>
</feature>
<feature type="strand" evidence="41">
    <location>
        <begin position="76"/>
        <end position="81"/>
    </location>
</feature>
<feature type="strand" evidence="41">
    <location>
        <begin position="88"/>
        <end position="93"/>
    </location>
</feature>
<feature type="helix" evidence="41">
    <location>
        <begin position="94"/>
        <end position="97"/>
    </location>
</feature>
<feature type="helix" evidence="41">
    <location>
        <begin position="102"/>
        <end position="120"/>
    </location>
</feature>
<feature type="helix" evidence="41">
    <location>
        <begin position="132"/>
        <end position="145"/>
    </location>
</feature>
<feature type="strand" evidence="41">
    <location>
        <begin position="151"/>
        <end position="154"/>
    </location>
</feature>
<feature type="helix" evidence="42">
    <location>
        <begin position="157"/>
        <end position="162"/>
    </location>
</feature>
<feature type="strand" evidence="41">
    <location>
        <begin position="165"/>
        <end position="171"/>
    </location>
</feature>
<feature type="helix" evidence="41">
    <location>
        <begin position="172"/>
        <end position="175"/>
    </location>
</feature>
<feature type="turn" evidence="41">
    <location>
        <begin position="177"/>
        <end position="181"/>
    </location>
</feature>
<feature type="strand" evidence="41">
    <location>
        <begin position="182"/>
        <end position="188"/>
    </location>
</feature>
<feature type="helix" evidence="41">
    <location>
        <begin position="198"/>
        <end position="204"/>
    </location>
</feature>
<feature type="strand" evidence="41">
    <location>
        <begin position="209"/>
        <end position="211"/>
    </location>
</feature>
<feature type="helix" evidence="40">
    <location>
        <begin position="328"/>
        <end position="330"/>
    </location>
</feature>
<accession>Q9H040</accession>
<accession>B1AKT0</accession>
<accession>B5MEF7</accession>
<accession>Q5TE78</accession>
<accession>Q6UWW6</accession>
<accession>Q96BC5</accession>
<accession>Q96KA0</accession>
<keyword id="KW-0002">3D-structure</keyword>
<keyword id="KW-0007">Acetylation</keyword>
<keyword id="KW-0025">Alternative splicing</keyword>
<keyword id="KW-0068">Autocatalytic cleavage</keyword>
<keyword id="KW-0158">Chromosome</keyword>
<keyword id="KW-0225">Disease variant</keyword>
<keyword id="KW-0227">DNA damage</keyword>
<keyword id="KW-0234">DNA repair</keyword>
<keyword id="KW-0378">Hydrolase</keyword>
<keyword id="KW-1017">Isopeptide bond</keyword>
<keyword id="KW-0479">Metal-binding</keyword>
<keyword id="KW-0482">Metalloprotease</keyword>
<keyword id="KW-0539">Nucleus</keyword>
<keyword id="KW-0597">Phosphoprotein</keyword>
<keyword id="KW-0645">Protease</keyword>
<keyword id="KW-1267">Proteomics identification</keyword>
<keyword id="KW-1185">Reference proteome</keyword>
<keyword id="KW-0832">Ubl conjugation</keyword>
<keyword id="KW-0862">Zinc</keyword>
<keyword id="KW-0863">Zinc-finger</keyword>
<name>SPRTN_HUMAN</name>
<comment type="function">
    <text evidence="1 9 10 11 12 13 14 17 18 19 20 21 22 23 24">DNA-dependent metalloendopeptidase that mediates the proteolytic cleavage of covalent DNA-protein cross-links (DPCs) during DNA synthesis, thereby playing a key role in maintaining genomic integrity (PubMed:27852435, PubMed:27871365, PubMed:27871366, PubMed:30893605, PubMed:32649882, PubMed:36608669). DPCs are highly toxic DNA lesions that interfere with essential chromatin transactions, such as replication and transcription, and which are induced by reactive agents, such as UV light or formaldehyde (PubMed:27852435, PubMed:27871365, PubMed:27871366, PubMed:32649882, PubMed:36608669). Associates with the DNA replication machinery and specifically removes DPCs during DNA synthesis (PubMed:27852435, PubMed:27871365, PubMed:27871366, PubMed:32649882). Catalyzes proteolytic cleavage of the HMCES DNA-protein cross-link following unfolding by the BRIP1/FANCJ helicase (PubMed:36608669). Acts as a pleiotropic protease for DNA-binding proteins cross-linked with DNA, such as TOP1, TOP2A, histones H3 and H4 (PubMed:27871366). Mediates degradation of DPCs that are not ubiquitinated, while it is not able to degrade ubiquitinated DPCs (By similarity). SPRTN activation requires polymerase collision with DPCs followed by helicase bypass of DPCs (By similarity). Involved in recruitment of VCP/p97 to sites of DNA damage (PubMed:22902628, PubMed:23042605, PubMed:23042607, PubMed:32152270). Also acts as an activator of CHEK1 during normal DNA replication by mediating proteolytic cleavage of CHEK1, thereby promoting CHEK1 removal from chromatin and subsequent activation (PubMed:31316063). Does not activate CHEK1 in response to DNA damage (PubMed:31316063). May also act as a 'reader' of ubiquitinated PCNA: recruited to sites of UV damage and interacts with ubiquitinated PCNA and RAD18, the E3 ubiquitin ligase that monoubiquitinates PCNA (PubMed:22681887, PubMed:22894931, PubMed:22902628, PubMed:22987070). Facilitates chromatin association of RAD18 and is required for efficient PCNA monoubiquitination, promoting a feed-forward loop to enhance PCNA ubiquitination and translesion DNA synthesis (PubMed:22681887).</text>
</comment>
<comment type="cofactor">
    <cofactor evidence="17 20">
        <name>Zn(2+)</name>
        <dbReference type="ChEBI" id="CHEBI:29105"/>
    </cofactor>
</comment>
<comment type="activity regulation">
    <text evidence="17 18 19 20">DNA-binding activates the protease activity: single-stranded DNA-binding specifically activates ability to cleave covalent DNA-protein cross-links (DPCs) (PubMed:27871365, PubMed:27871366, PubMed:30893605). In contrast, double-stranded DNA-binding specifically activates autocatalytic cleavage, and subsequent inactivation (PubMed:27852435, PubMed:27871365, PubMed:30893605).</text>
</comment>
<comment type="subunit">
    <text evidence="9 10 11 12 13 14 16 20">Homodimer (PubMed:30893605). Interacts (VIA PIP-box) with PCNA (when ubiquitinated) (PubMed:22681887, PubMed:22894931, PubMed:22902628, PubMed:22987070, PubMed:23042605, PubMed:23042607, PubMed:27084448). Interacts (via its SHP-box) with VCP/p97 (PubMed:22902628, PubMed:23042605, PubMed:23042607). Interacts with RAD18 (PubMed:22681887). Interacts with KCTD13 and POLD3 (PubMed:22902628).</text>
</comment>
<comment type="subcellular location">
    <subcellularLocation>
        <location evidence="9 10 13 14 17">Nucleus</location>
    </subcellularLocation>
    <subcellularLocation>
        <location evidence="10 11 12 13 17 18 19 21 23">Chromosome</location>
    </subcellularLocation>
    <text evidence="10 12 13 18 21 23">Localizes to sites of UV damage via the PIP-box (PubMed:22894931, PubMed:23042605). Recruited to stalled replication forks at sites of replication stress following deubiquitination (PubMed:22894931, PubMed:22987070, PubMed:23042605, PubMed:27871365, PubMed:32649882). CHEK1 stimulates recruitment to chromatin (PubMed:31316063).</text>
</comment>
<comment type="alternative products">
    <event type="alternative splicing"/>
    <isoform>
        <id>Q9H040-1</id>
        <name>1</name>
        <sequence type="displayed"/>
    </isoform>
    <isoform>
        <id>Q9H040-2</id>
        <name>2</name>
        <sequence type="described" ref="VSP_029891 VSP_029892"/>
    </isoform>
    <isoform>
        <id>Q9H040-3</id>
        <name>3</name>
        <sequence type="described" ref="VSP_046925 VSP_029891 VSP_029892"/>
    </isoform>
</comment>
<comment type="developmental stage">
    <text evidence="13">Predominantly expressed during S- and G2-phases and early M-phase (PubMed:23042605). It then drops, and is probably degraded by the APC/C complex (PubMed:23042605).</text>
</comment>
<comment type="domain">
    <text evidence="9 10 12 13 14 16">The PIP-box mediates the interaction with PCNA, while the UBZ4-type zinc finger mediates binding to 'Lys-48'- and 'Lys-63'-linked polyubiquitin.</text>
</comment>
<comment type="PTM">
    <text evidence="17 18 19 20">Autocatalytically cleaved in response to double-stranded DNA-binding: autocatalytic cleavage takes place in trans and leads to inactivation.</text>
</comment>
<comment type="PTM">
    <text evidence="18 23">Monoubiquitinated; monoubiquitination promotes exclusion from chromatin (PubMed:27871365, PubMed:32649882). Deubiquitinated by VCPIP1: deubiquitination is required for subsequent acetylation and recruitment to chromatin and DNA damage sites (PubMed:27871365, PubMed:32649882).</text>
</comment>
<comment type="PTM">
    <text evidence="23">Acetylated following deubiquitination by VCPIP1, leading to recruitment to chromatin and DNA damage sites.</text>
</comment>
<comment type="PTM">
    <text evidence="21">Phosphorylation by CHEK1 promotes recruitment to chromatin.</text>
</comment>
<comment type="disease" evidence="15 17 18 19">
    <disease id="DI-04313">
        <name>Ruijs-Aalfs syndrome</name>
        <acronym>RJALS</acronym>
        <description>A syndrome characterized by genomic instability, progeroid features, and susceptibility toward early onset hepatocellular carcinoma.</description>
        <dbReference type="MIM" id="616200"/>
    </disease>
    <text>The disease is caused by variants affecting the gene represented in this entry.</text>
</comment>
<comment type="similarity">
    <text evidence="30">Belongs to the Spartan family.</text>
</comment>
<comment type="sequence caution" evidence="30">
    <conflict type="frameshift">
        <sequence resource="EMBL-CDS" id="BAB55037"/>
    </conflict>
</comment>
<evidence type="ECO:0000250" key="1">
    <source>
        <dbReference type="UniProtKB" id="A0A1L8G2K9"/>
    </source>
</evidence>
<evidence type="ECO:0000255" key="2"/>
<evidence type="ECO:0000255" key="3">
    <source>
        <dbReference type="PROSITE-ProRule" id="PRU01256"/>
    </source>
</evidence>
<evidence type="ECO:0000255" key="4">
    <source>
        <dbReference type="PROSITE-ProRule" id="PRU10095"/>
    </source>
</evidence>
<evidence type="ECO:0000256" key="5">
    <source>
        <dbReference type="SAM" id="MobiDB-lite"/>
    </source>
</evidence>
<evidence type="ECO:0000269" key="6">
    <source>
    </source>
</evidence>
<evidence type="ECO:0000269" key="7">
    <source>
    </source>
</evidence>
<evidence type="ECO:0000269" key="8">
    <source>
    </source>
</evidence>
<evidence type="ECO:0000269" key="9">
    <source>
    </source>
</evidence>
<evidence type="ECO:0000269" key="10">
    <source>
    </source>
</evidence>
<evidence type="ECO:0000269" key="11">
    <source>
    </source>
</evidence>
<evidence type="ECO:0000269" key="12">
    <source>
    </source>
</evidence>
<evidence type="ECO:0000269" key="13">
    <source>
    </source>
</evidence>
<evidence type="ECO:0000269" key="14">
    <source>
    </source>
</evidence>
<evidence type="ECO:0000269" key="15">
    <source>
    </source>
</evidence>
<evidence type="ECO:0000269" key="16">
    <source>
    </source>
</evidence>
<evidence type="ECO:0000269" key="17">
    <source>
    </source>
</evidence>
<evidence type="ECO:0000269" key="18">
    <source>
    </source>
</evidence>
<evidence type="ECO:0000269" key="19">
    <source>
    </source>
</evidence>
<evidence type="ECO:0000269" key="20">
    <source>
    </source>
</evidence>
<evidence type="ECO:0000269" key="21">
    <source>
    </source>
</evidence>
<evidence type="ECO:0000269" key="22">
    <source>
    </source>
</evidence>
<evidence type="ECO:0000269" key="23">
    <source>
    </source>
</evidence>
<evidence type="ECO:0000269" key="24">
    <source>
    </source>
</evidence>
<evidence type="ECO:0000303" key="25">
    <source>
    </source>
</evidence>
<evidence type="ECO:0000303" key="26">
    <source>
    </source>
</evidence>
<evidence type="ECO:0000303" key="27">
    <source>
    </source>
</evidence>
<evidence type="ECO:0000303" key="28">
    <source>
    </source>
</evidence>
<evidence type="ECO:0000303" key="29">
    <source>
    </source>
</evidence>
<evidence type="ECO:0000305" key="30"/>
<evidence type="ECO:0000312" key="31">
    <source>
        <dbReference type="HGNC" id="HGNC:25356"/>
    </source>
</evidence>
<evidence type="ECO:0007744" key="32">
    <source>
        <dbReference type="PDB" id="5IY4"/>
    </source>
</evidence>
<evidence type="ECO:0007744" key="33">
    <source>
        <dbReference type="PDB" id="6MDW"/>
    </source>
</evidence>
<evidence type="ECO:0007744" key="34">
    <source>
        <dbReference type="PDB" id="6MDX"/>
    </source>
</evidence>
<evidence type="ECO:0007744" key="35">
    <source>
    </source>
</evidence>
<evidence type="ECO:0007744" key="36">
    <source>
    </source>
</evidence>
<evidence type="ECO:0007744" key="37">
    <source>
    </source>
</evidence>
<evidence type="ECO:0007744" key="38">
    <source>
    </source>
</evidence>
<evidence type="ECO:0007744" key="39">
    <source>
    </source>
</evidence>
<evidence type="ECO:0007829" key="40">
    <source>
        <dbReference type="PDB" id="5IY4"/>
    </source>
</evidence>
<evidence type="ECO:0007829" key="41">
    <source>
        <dbReference type="PDB" id="6MDW"/>
    </source>
</evidence>
<evidence type="ECO:0007829" key="42">
    <source>
        <dbReference type="PDB" id="6MDX"/>
    </source>
</evidence>
<gene>
    <name evidence="28 31" type="primary">SPRTN</name>
    <name evidence="28 31" type="synonym">C1orf124</name>
    <name evidence="29" type="synonym">DVC1</name>
    <name type="ORF">UNQ1880/PRO4323</name>
</gene>
<reference key="1">
    <citation type="journal article" date="2003" name="Genome Res.">
        <title>The secreted protein discovery initiative (SPDI), a large-scale effort to identify novel human secreted and transmembrane proteins: a bioinformatics assessment.</title>
        <authorList>
            <person name="Clark H.F."/>
            <person name="Gurney A.L."/>
            <person name="Abaya E."/>
            <person name="Baker K."/>
            <person name="Baldwin D.T."/>
            <person name="Brush J."/>
            <person name="Chen J."/>
            <person name="Chow B."/>
            <person name="Chui C."/>
            <person name="Crowley C."/>
            <person name="Currell B."/>
            <person name="Deuel B."/>
            <person name="Dowd P."/>
            <person name="Eaton D."/>
            <person name="Foster J.S."/>
            <person name="Grimaldi C."/>
            <person name="Gu Q."/>
            <person name="Hass P.E."/>
            <person name="Heldens S."/>
            <person name="Huang A."/>
            <person name="Kim H.S."/>
            <person name="Klimowski L."/>
            <person name="Jin Y."/>
            <person name="Johnson S."/>
            <person name="Lee J."/>
            <person name="Lewis L."/>
            <person name="Liao D."/>
            <person name="Mark M.R."/>
            <person name="Robbie E."/>
            <person name="Sanchez C."/>
            <person name="Schoenfeld J."/>
            <person name="Seshagiri S."/>
            <person name="Simmons L."/>
            <person name="Singh J."/>
            <person name="Smith V."/>
            <person name="Stinson J."/>
            <person name="Vagts A."/>
            <person name="Vandlen R.L."/>
            <person name="Watanabe C."/>
            <person name="Wieand D."/>
            <person name="Woods K."/>
            <person name="Xie M.-H."/>
            <person name="Yansura D.G."/>
            <person name="Yi S."/>
            <person name="Yu G."/>
            <person name="Yuan J."/>
            <person name="Zhang M."/>
            <person name="Zhang Z."/>
            <person name="Goddard A.D."/>
            <person name="Wood W.I."/>
            <person name="Godowski P.J."/>
            <person name="Gray A.M."/>
        </authorList>
    </citation>
    <scope>NUCLEOTIDE SEQUENCE [LARGE SCALE MRNA] (ISOFORM 2)</scope>
</reference>
<reference key="2">
    <citation type="journal article" date="2004" name="Nat. Genet.">
        <title>Complete sequencing and characterization of 21,243 full-length human cDNAs.</title>
        <authorList>
            <person name="Ota T."/>
            <person name="Suzuki Y."/>
            <person name="Nishikawa T."/>
            <person name="Otsuki T."/>
            <person name="Sugiyama T."/>
            <person name="Irie R."/>
            <person name="Wakamatsu A."/>
            <person name="Hayashi K."/>
            <person name="Sato H."/>
            <person name="Nagai K."/>
            <person name="Kimura K."/>
            <person name="Makita H."/>
            <person name="Sekine M."/>
            <person name="Obayashi M."/>
            <person name="Nishi T."/>
            <person name="Shibahara T."/>
            <person name="Tanaka T."/>
            <person name="Ishii S."/>
            <person name="Yamamoto J."/>
            <person name="Saito K."/>
            <person name="Kawai Y."/>
            <person name="Isono Y."/>
            <person name="Nakamura Y."/>
            <person name="Nagahari K."/>
            <person name="Murakami K."/>
            <person name="Yasuda T."/>
            <person name="Iwayanagi T."/>
            <person name="Wagatsuma M."/>
            <person name="Shiratori A."/>
            <person name="Sudo H."/>
            <person name="Hosoiri T."/>
            <person name="Kaku Y."/>
            <person name="Kodaira H."/>
            <person name="Kondo H."/>
            <person name="Sugawara M."/>
            <person name="Takahashi M."/>
            <person name="Kanda K."/>
            <person name="Yokoi T."/>
            <person name="Furuya T."/>
            <person name="Kikkawa E."/>
            <person name="Omura Y."/>
            <person name="Abe K."/>
            <person name="Kamihara K."/>
            <person name="Katsuta N."/>
            <person name="Sato K."/>
            <person name="Tanikawa M."/>
            <person name="Yamazaki M."/>
            <person name="Ninomiya K."/>
            <person name="Ishibashi T."/>
            <person name="Yamashita H."/>
            <person name="Murakawa K."/>
            <person name="Fujimori K."/>
            <person name="Tanai H."/>
            <person name="Kimata M."/>
            <person name="Watanabe M."/>
            <person name="Hiraoka S."/>
            <person name="Chiba Y."/>
            <person name="Ishida S."/>
            <person name="Ono Y."/>
            <person name="Takiguchi S."/>
            <person name="Watanabe S."/>
            <person name="Yosida M."/>
            <person name="Hotuta T."/>
            <person name="Kusano J."/>
            <person name="Kanehori K."/>
            <person name="Takahashi-Fujii A."/>
            <person name="Hara H."/>
            <person name="Tanase T.-O."/>
            <person name="Nomura Y."/>
            <person name="Togiya S."/>
            <person name="Komai F."/>
            <person name="Hara R."/>
            <person name="Takeuchi K."/>
            <person name="Arita M."/>
            <person name="Imose N."/>
            <person name="Musashino K."/>
            <person name="Yuuki H."/>
            <person name="Oshima A."/>
            <person name="Sasaki N."/>
            <person name="Aotsuka S."/>
            <person name="Yoshikawa Y."/>
            <person name="Matsunawa H."/>
            <person name="Ichihara T."/>
            <person name="Shiohata N."/>
            <person name="Sano S."/>
            <person name="Moriya S."/>
            <person name="Momiyama H."/>
            <person name="Satoh N."/>
            <person name="Takami S."/>
            <person name="Terashima Y."/>
            <person name="Suzuki O."/>
            <person name="Nakagawa S."/>
            <person name="Senoh A."/>
            <person name="Mizoguchi H."/>
            <person name="Goto Y."/>
            <person name="Shimizu F."/>
            <person name="Wakebe H."/>
            <person name="Hishigaki H."/>
            <person name="Watanabe T."/>
            <person name="Sugiyama A."/>
            <person name="Takemoto M."/>
            <person name="Kawakami B."/>
            <person name="Yamazaki M."/>
            <person name="Watanabe K."/>
            <person name="Kumagai A."/>
            <person name="Itakura S."/>
            <person name="Fukuzumi Y."/>
            <person name="Fujimori Y."/>
            <person name="Komiyama M."/>
            <person name="Tashiro H."/>
            <person name="Tanigami A."/>
            <person name="Fujiwara T."/>
            <person name="Ono T."/>
            <person name="Yamada K."/>
            <person name="Fujii Y."/>
            <person name="Ozaki K."/>
            <person name="Hirao M."/>
            <person name="Ohmori Y."/>
            <person name="Kawabata A."/>
            <person name="Hikiji T."/>
            <person name="Kobatake N."/>
            <person name="Inagaki H."/>
            <person name="Ikema Y."/>
            <person name="Okamoto S."/>
            <person name="Okitani R."/>
            <person name="Kawakami T."/>
            <person name="Noguchi S."/>
            <person name="Itoh T."/>
            <person name="Shigeta K."/>
            <person name="Senba T."/>
            <person name="Matsumura K."/>
            <person name="Nakajima Y."/>
            <person name="Mizuno T."/>
            <person name="Morinaga M."/>
            <person name="Sasaki M."/>
            <person name="Togashi T."/>
            <person name="Oyama M."/>
            <person name="Hata H."/>
            <person name="Watanabe M."/>
            <person name="Komatsu T."/>
            <person name="Mizushima-Sugano J."/>
            <person name="Satoh T."/>
            <person name="Shirai Y."/>
            <person name="Takahashi Y."/>
            <person name="Nakagawa K."/>
            <person name="Okumura K."/>
            <person name="Nagase T."/>
            <person name="Nomura N."/>
            <person name="Kikuchi H."/>
            <person name="Masuho Y."/>
            <person name="Yamashita R."/>
            <person name="Nakai K."/>
            <person name="Yada T."/>
            <person name="Nakamura Y."/>
            <person name="Ohara O."/>
            <person name="Isogai T."/>
            <person name="Sugano S."/>
        </authorList>
    </citation>
    <scope>NUCLEOTIDE SEQUENCE [LARGE SCALE MRNA] (ISOFORMS 1 AND 3)</scope>
    <scope>VARIANT LEU-296</scope>
    <source>
        <tissue>Embryo</tissue>
        <tissue>Teratocarcinoma</tissue>
    </source>
</reference>
<reference key="3">
    <citation type="journal article" date="2007" name="BMC Genomics">
        <title>The full-ORF clone resource of the German cDNA consortium.</title>
        <authorList>
            <person name="Bechtel S."/>
            <person name="Rosenfelder H."/>
            <person name="Duda A."/>
            <person name="Schmidt C.P."/>
            <person name="Ernst U."/>
            <person name="Wellenreuther R."/>
            <person name="Mehrle A."/>
            <person name="Schuster C."/>
            <person name="Bahr A."/>
            <person name="Bloecker H."/>
            <person name="Heubner D."/>
            <person name="Hoerlein A."/>
            <person name="Michel G."/>
            <person name="Wedler H."/>
            <person name="Koehrer K."/>
            <person name="Ottenwaelder B."/>
            <person name="Poustka A."/>
            <person name="Wiemann S."/>
            <person name="Schupp I."/>
        </authorList>
    </citation>
    <scope>NUCLEOTIDE SEQUENCE [LARGE SCALE MRNA] (ISOFORM 1)</scope>
    <scope>VARIANT LEU-296</scope>
    <source>
        <tissue>Brain</tissue>
    </source>
</reference>
<reference key="4">
    <citation type="journal article" date="2006" name="Nature">
        <title>The DNA sequence and biological annotation of human chromosome 1.</title>
        <authorList>
            <person name="Gregory S.G."/>
            <person name="Barlow K.F."/>
            <person name="McLay K.E."/>
            <person name="Kaul R."/>
            <person name="Swarbreck D."/>
            <person name="Dunham A."/>
            <person name="Scott C.E."/>
            <person name="Howe K.L."/>
            <person name="Woodfine K."/>
            <person name="Spencer C.C.A."/>
            <person name="Jones M.C."/>
            <person name="Gillson C."/>
            <person name="Searle S."/>
            <person name="Zhou Y."/>
            <person name="Kokocinski F."/>
            <person name="McDonald L."/>
            <person name="Evans R."/>
            <person name="Phillips K."/>
            <person name="Atkinson A."/>
            <person name="Cooper R."/>
            <person name="Jones C."/>
            <person name="Hall R.E."/>
            <person name="Andrews T.D."/>
            <person name="Lloyd C."/>
            <person name="Ainscough R."/>
            <person name="Almeida J.P."/>
            <person name="Ambrose K.D."/>
            <person name="Anderson F."/>
            <person name="Andrew R.W."/>
            <person name="Ashwell R.I.S."/>
            <person name="Aubin K."/>
            <person name="Babbage A.K."/>
            <person name="Bagguley C.L."/>
            <person name="Bailey J."/>
            <person name="Beasley H."/>
            <person name="Bethel G."/>
            <person name="Bird C.P."/>
            <person name="Bray-Allen S."/>
            <person name="Brown J.Y."/>
            <person name="Brown A.J."/>
            <person name="Buckley D."/>
            <person name="Burton J."/>
            <person name="Bye J."/>
            <person name="Carder C."/>
            <person name="Chapman J.C."/>
            <person name="Clark S.Y."/>
            <person name="Clarke G."/>
            <person name="Clee C."/>
            <person name="Cobley V."/>
            <person name="Collier R.E."/>
            <person name="Corby N."/>
            <person name="Coville G.J."/>
            <person name="Davies J."/>
            <person name="Deadman R."/>
            <person name="Dunn M."/>
            <person name="Earthrowl M."/>
            <person name="Ellington A.G."/>
            <person name="Errington H."/>
            <person name="Frankish A."/>
            <person name="Frankland J."/>
            <person name="French L."/>
            <person name="Garner P."/>
            <person name="Garnett J."/>
            <person name="Gay L."/>
            <person name="Ghori M.R.J."/>
            <person name="Gibson R."/>
            <person name="Gilby L.M."/>
            <person name="Gillett W."/>
            <person name="Glithero R.J."/>
            <person name="Grafham D.V."/>
            <person name="Griffiths C."/>
            <person name="Griffiths-Jones S."/>
            <person name="Grocock R."/>
            <person name="Hammond S."/>
            <person name="Harrison E.S.I."/>
            <person name="Hart E."/>
            <person name="Haugen E."/>
            <person name="Heath P.D."/>
            <person name="Holmes S."/>
            <person name="Holt K."/>
            <person name="Howden P.J."/>
            <person name="Hunt A.R."/>
            <person name="Hunt S.E."/>
            <person name="Hunter G."/>
            <person name="Isherwood J."/>
            <person name="James R."/>
            <person name="Johnson C."/>
            <person name="Johnson D."/>
            <person name="Joy A."/>
            <person name="Kay M."/>
            <person name="Kershaw J.K."/>
            <person name="Kibukawa M."/>
            <person name="Kimberley A.M."/>
            <person name="King A."/>
            <person name="Knights A.J."/>
            <person name="Lad H."/>
            <person name="Laird G."/>
            <person name="Lawlor S."/>
            <person name="Leongamornlert D.A."/>
            <person name="Lloyd D.M."/>
            <person name="Loveland J."/>
            <person name="Lovell J."/>
            <person name="Lush M.J."/>
            <person name="Lyne R."/>
            <person name="Martin S."/>
            <person name="Mashreghi-Mohammadi M."/>
            <person name="Matthews L."/>
            <person name="Matthews N.S.W."/>
            <person name="McLaren S."/>
            <person name="Milne S."/>
            <person name="Mistry S."/>
            <person name="Moore M.J.F."/>
            <person name="Nickerson T."/>
            <person name="O'Dell C.N."/>
            <person name="Oliver K."/>
            <person name="Palmeiri A."/>
            <person name="Palmer S.A."/>
            <person name="Parker A."/>
            <person name="Patel D."/>
            <person name="Pearce A.V."/>
            <person name="Peck A.I."/>
            <person name="Pelan S."/>
            <person name="Phelps K."/>
            <person name="Phillimore B.J."/>
            <person name="Plumb R."/>
            <person name="Rajan J."/>
            <person name="Raymond C."/>
            <person name="Rouse G."/>
            <person name="Saenphimmachak C."/>
            <person name="Sehra H.K."/>
            <person name="Sheridan E."/>
            <person name="Shownkeen R."/>
            <person name="Sims S."/>
            <person name="Skuce C.D."/>
            <person name="Smith M."/>
            <person name="Steward C."/>
            <person name="Subramanian S."/>
            <person name="Sycamore N."/>
            <person name="Tracey A."/>
            <person name="Tromans A."/>
            <person name="Van Helmond Z."/>
            <person name="Wall M."/>
            <person name="Wallis J.M."/>
            <person name="White S."/>
            <person name="Whitehead S.L."/>
            <person name="Wilkinson J.E."/>
            <person name="Willey D.L."/>
            <person name="Williams H."/>
            <person name="Wilming L."/>
            <person name="Wray P.W."/>
            <person name="Wu Z."/>
            <person name="Coulson A."/>
            <person name="Vaudin M."/>
            <person name="Sulston J.E."/>
            <person name="Durbin R.M."/>
            <person name="Hubbard T."/>
            <person name="Wooster R."/>
            <person name="Dunham I."/>
            <person name="Carter N.P."/>
            <person name="McVean G."/>
            <person name="Ross M.T."/>
            <person name="Harrow J."/>
            <person name="Olson M.V."/>
            <person name="Beck S."/>
            <person name="Rogers J."/>
            <person name="Bentley D.R."/>
        </authorList>
    </citation>
    <scope>NUCLEOTIDE SEQUENCE [LARGE SCALE GENOMIC DNA]</scope>
</reference>
<reference key="5">
    <citation type="submission" date="2005-07" db="EMBL/GenBank/DDBJ databases">
        <authorList>
            <person name="Mural R.J."/>
            <person name="Istrail S."/>
            <person name="Sutton G.G."/>
            <person name="Florea L."/>
            <person name="Halpern A.L."/>
            <person name="Mobarry C.M."/>
            <person name="Lippert R."/>
            <person name="Walenz B."/>
            <person name="Shatkay H."/>
            <person name="Dew I."/>
            <person name="Miller J.R."/>
            <person name="Flanigan M.J."/>
            <person name="Edwards N.J."/>
            <person name="Bolanos R."/>
            <person name="Fasulo D."/>
            <person name="Halldorsson B.V."/>
            <person name="Hannenhalli S."/>
            <person name="Turner R."/>
            <person name="Yooseph S."/>
            <person name="Lu F."/>
            <person name="Nusskern D.R."/>
            <person name="Shue B.C."/>
            <person name="Zheng X.H."/>
            <person name="Zhong F."/>
            <person name="Delcher A.L."/>
            <person name="Huson D.H."/>
            <person name="Kravitz S.A."/>
            <person name="Mouchard L."/>
            <person name="Reinert K."/>
            <person name="Remington K.A."/>
            <person name="Clark A.G."/>
            <person name="Waterman M.S."/>
            <person name="Eichler E.E."/>
            <person name="Adams M.D."/>
            <person name="Hunkapiller M.W."/>
            <person name="Myers E.W."/>
            <person name="Venter J.C."/>
        </authorList>
    </citation>
    <scope>NUCLEOTIDE SEQUENCE [LARGE SCALE GENOMIC DNA]</scope>
</reference>
<reference key="6">
    <citation type="journal article" date="2004" name="Genome Res.">
        <title>The status, quality, and expansion of the NIH full-length cDNA project: the Mammalian Gene Collection (MGC).</title>
        <authorList>
            <consortium name="The MGC Project Team"/>
        </authorList>
    </citation>
    <scope>NUCLEOTIDE SEQUENCE [LARGE SCALE MRNA] (ISOFORM 1)</scope>
    <scope>NUCLEOTIDE SEQUENCE [LARGE SCALE MRNA] OF 1-243 (ISOFORM 2)</scope>
    <scope>VARIANT LEU-296</scope>
    <source>
        <tissue>Colon</tissue>
        <tissue>Testis</tissue>
    </source>
</reference>
<reference key="7">
    <citation type="journal article" date="2009" name="Anal. Chem.">
        <title>Lys-N and trypsin cover complementary parts of the phosphoproteome in a refined SCX-based approach.</title>
        <authorList>
            <person name="Gauci S."/>
            <person name="Helbig A.O."/>
            <person name="Slijper M."/>
            <person name="Krijgsveld J."/>
            <person name="Heck A.J."/>
            <person name="Mohammed S."/>
        </authorList>
    </citation>
    <scope>IDENTIFICATION BY MASS SPECTROMETRY [LARGE SCALE ANALYSIS]</scope>
</reference>
<reference key="8">
    <citation type="journal article" date="2012" name="Cell Cycle">
        <title>Spartan/C1orf124 is important to prevent UV-induced mutagenesis.</title>
        <authorList>
            <person name="Machida Y."/>
            <person name="Kim M.S."/>
            <person name="Machida Y.J."/>
        </authorList>
    </citation>
    <scope>FUNCTION</scope>
    <scope>SUBCELLULAR LOCATION</scope>
    <scope>INTERACTION WITH PCNA</scope>
    <scope>MUTAGENESIS OF ASP-473 AND 331-TYR-PHE-332</scope>
</reference>
<reference key="9">
    <citation type="journal article" date="2012" name="J. Biol. Chem.">
        <title>Proliferating cell nuclear antigen (PCNA)-binding protein C1orf124 is a regulator of translesion synthesis.</title>
        <authorList>
            <person name="Ghosal G."/>
            <person name="Leung J.W."/>
            <person name="Nair B.C."/>
            <person name="Fong K.W."/>
            <person name="Chen J."/>
        </authorList>
    </citation>
    <scope>FUNCTION</scope>
    <scope>SUBCELLULAR LOCATION</scope>
    <scope>INTERACTION WITH KCTD13; PCNA; POLD3 AND VCP</scope>
</reference>
<reference key="10">
    <citation type="journal article" date="2012" name="Mol. Cell">
        <title>Spartan/C1orf124, a reader of PCNA ubiquitylation and a regulator of UV-induced DNA damage response.</title>
        <authorList>
            <person name="Centore R.C."/>
            <person name="Yazinski S.A."/>
            <person name="Tse A."/>
            <person name="Zou L."/>
        </authorList>
    </citation>
    <scope>FUNCTION</scope>
    <scope>SUBCELLULAR LOCATION</scope>
    <scope>DOMAIN</scope>
    <scope>INTERACTION WITH PCNA AND RAD18</scope>
    <scope>MUTAGENESIS OF 456-CYS--CYS-459</scope>
</reference>
<reference key="11">
    <citation type="journal article" date="2012" name="Nat. Struct. Mol. Biol.">
        <title>DVC1 (C1orf124) recruits the p97 protein segregase to sites of DNA damage.</title>
        <authorList>
            <person name="Davis E.J."/>
            <person name="Lachaud C."/>
            <person name="Appleton P."/>
            <person name="Macartney T.J."/>
            <person name="Nathke I."/>
            <person name="Rouse J."/>
        </authorList>
    </citation>
    <scope>FUNCTION</scope>
    <scope>SUBCELLULAR LOCATION</scope>
    <scope>DOMAIN</scope>
    <scope>INTERACTION WITH PCNA AND VCP</scope>
    <scope>MUTAGENESIS OF 325-GLN--PHE-332 AND 456-CYS--CYS-459</scope>
</reference>
<reference key="12">
    <citation type="journal article" date="2012" name="Nat. Struct. Mol. Biol.">
        <title>DVC1 (C1orf124) is a DNA damage-targeting p97 adaptor that promotes ubiquitin-dependent responses to replication blocks.</title>
        <authorList>
            <person name="Mosbech A."/>
            <person name="Gibbs-Seymour I."/>
            <person name="Kagias K."/>
            <person name="Thorslund T."/>
            <person name="Beli P."/>
            <person name="Povlsen L."/>
            <person name="Nielsen S.V."/>
            <person name="Smedegaard S."/>
            <person name="Sedgwick G."/>
            <person name="Lukas C."/>
            <person name="Hartmann-Petersen R."/>
            <person name="Lukas J."/>
            <person name="Choudhary C."/>
            <person name="Pocock R."/>
            <person name="Bekker-Jensen S."/>
            <person name="Mailand N."/>
        </authorList>
    </citation>
    <scope>FUNCTION</scope>
    <scope>SUBCELLULAR LOCATION</scope>
    <scope>DOMAIN</scope>
    <scope>DEVELOPMENTAL STAGE</scope>
    <scope>INTERACTION WITH PCNA AND VCP</scope>
    <scope>MUTAGENESIS OF PHE-253; LEU-260; 331-TYR-PHE-332 AND 456-CYS--CYS-459</scope>
</reference>
<reference key="13">
    <citation type="journal article" date="2012" name="Nucleic Acids Res.">
        <title>Characterization of human Spartan/C1orf124, an ubiquitin-PCNA interacting regulator of DNA damage tolerance.</title>
        <authorList>
            <person name="Juhasz S."/>
            <person name="Balogh D."/>
            <person name="Hajdu I."/>
            <person name="Burkovics P."/>
            <person name="Villamil M.A."/>
            <person name="Zhuang Z."/>
            <person name="Haracska L."/>
        </authorList>
    </citation>
    <scope>FUNCTION</scope>
    <scope>SUBCELLULAR LOCATION</scope>
    <scope>INTERACTION WITH PCNA</scope>
</reference>
<reference key="14">
    <citation type="journal article" date="2012" name="Proc. Natl. Acad. Sci. U.S.A.">
        <title>N-terminal acetylome analyses and functional insights of the N-terminal acetyltransferase NatB.</title>
        <authorList>
            <person name="Van Damme P."/>
            <person name="Lasa M."/>
            <person name="Polevoda B."/>
            <person name="Gazquez C."/>
            <person name="Elosegui-Artola A."/>
            <person name="Kim D.S."/>
            <person name="De Juan-Pardo E."/>
            <person name="Demeyer K."/>
            <person name="Hole K."/>
            <person name="Larrea E."/>
            <person name="Timmerman E."/>
            <person name="Prieto J."/>
            <person name="Arnesen T."/>
            <person name="Sherman F."/>
            <person name="Gevaert K."/>
            <person name="Aldabe R."/>
        </authorList>
    </citation>
    <scope>ACETYLATION [LARGE SCALE ANALYSIS] AT MET-1</scope>
    <scope>IDENTIFICATION BY MASS SPECTROMETRY [LARGE SCALE ANALYSIS]</scope>
</reference>
<reference key="15">
    <citation type="journal article" date="2013" name="J. Proteome Res.">
        <title>Toward a comprehensive characterization of a human cancer cell phosphoproteome.</title>
        <authorList>
            <person name="Zhou H."/>
            <person name="Di Palma S."/>
            <person name="Preisinger C."/>
            <person name="Peng M."/>
            <person name="Polat A.N."/>
            <person name="Heck A.J."/>
            <person name="Mohammed S."/>
        </authorList>
    </citation>
    <scope>PHOSPHORYLATION [LARGE SCALE ANALYSIS] AT SER-268</scope>
    <scope>IDENTIFICATION BY MASS SPECTROMETRY [LARGE SCALE ANALYSIS]</scope>
    <source>
        <tissue>Cervix carcinoma</tissue>
        <tissue>Erythroleukemia</tissue>
    </source>
</reference>
<reference key="16">
    <citation type="journal article" date="2014" name="Nat. Genet.">
        <title>Mutations in SPRTN cause early onset hepatocellular carcinoma, genomic instability and progeroid features.</title>
        <authorList>
            <person name="Lessel D."/>
            <person name="Vaz B."/>
            <person name="Halder S."/>
            <person name="Lockhart P.J."/>
            <person name="Marinovic-Terzic I."/>
            <person name="Lopez-Mosqueda J."/>
            <person name="Philipp M."/>
            <person name="Sim J.C."/>
            <person name="Smith K.R."/>
            <person name="Oehler J."/>
            <person name="Cabrera E."/>
            <person name="Freire R."/>
            <person name="Pope K."/>
            <person name="Nahid A."/>
            <person name="Norris F."/>
            <person name="Leventer R.J."/>
            <person name="Delatycki M.B."/>
            <person name="Barbi G."/>
            <person name="von Ameln S."/>
            <person name="Hoegel J."/>
            <person name="Degoricija M."/>
            <person name="Fertig R."/>
            <person name="Burkhalter M.D."/>
            <person name="Hofmann K."/>
            <person name="Thiele H."/>
            <person name="Altmueller J."/>
            <person name="Nuernberg G."/>
            <person name="Nuernberg P."/>
            <person name="Bahlo M."/>
            <person name="Martin G.M."/>
            <person name="Aalfs C.M."/>
            <person name="Oshima J."/>
            <person name="Terzic J."/>
            <person name="Amor D.J."/>
            <person name="Dikic I."/>
            <person name="Ramadan K."/>
            <person name="Kubisch C."/>
        </authorList>
    </citation>
    <scope>INVOLVEMENT IN RJALS</scope>
    <scope>VARIANT RJALS CYS-117</scope>
    <scope>CHARACTERIZATION OF VARIANT RJALS CYS-117</scope>
</reference>
<reference key="17">
    <citation type="journal article" date="2014" name="Nat. Struct. Mol. Biol.">
        <title>Uncovering global SUMOylation signaling networks in a site-specific manner.</title>
        <authorList>
            <person name="Hendriks I.A."/>
            <person name="D'Souza R.C."/>
            <person name="Yang B."/>
            <person name="Verlaan-de Vries M."/>
            <person name="Mann M."/>
            <person name="Vertegaal A.C."/>
        </authorList>
    </citation>
    <scope>SUMOYLATION [LARGE SCALE ANALYSIS] AT LYS-484</scope>
    <scope>IDENTIFICATION BY MASS SPECTROMETRY [LARGE SCALE ANALYSIS]</scope>
</reference>
<reference key="18">
    <citation type="journal article" date="2015" name="Mol. Cell. Proteomics">
        <title>System-wide analysis of SUMOylation dynamics in response to replication stress reveals novel small ubiquitin-like modified target proteins and acceptor lysines relevant for genome stability.</title>
        <authorList>
            <person name="Xiao Z."/>
            <person name="Chang J.G."/>
            <person name="Hendriks I.A."/>
            <person name="Sigurdsson J.O."/>
            <person name="Olsen J.V."/>
            <person name="Vertegaal A.C."/>
        </authorList>
    </citation>
    <scope>SUMOYLATION [LARGE SCALE ANALYSIS] AT LYS-423</scope>
    <scope>IDENTIFICATION BY MASS SPECTROMETRY [LARGE SCALE ANALYSIS]</scope>
</reference>
<reference key="19">
    <citation type="journal article" date="2017" name="Nat. Struct. Mol. Biol.">
        <title>Site-specific mapping of the human SUMO proteome reveals co-modification with phosphorylation.</title>
        <authorList>
            <person name="Hendriks I.A."/>
            <person name="Lyon D."/>
            <person name="Young C."/>
            <person name="Jensen L.J."/>
            <person name="Vertegaal A.C."/>
            <person name="Nielsen M.L."/>
        </authorList>
    </citation>
    <scope>SUMOYLATION [LARGE SCALE ANALYSIS] AT LYS-303; LYS-341; LYS-361; LYS-376; LYS-423 AND LYS-424</scope>
    <scope>IDENTIFICATION BY MASS SPECTROMETRY [LARGE SCALE ANALYSIS]</scope>
</reference>
<reference key="20">
    <citation type="journal article" date="2016" name="Elife">
        <title>SPRTN is a mammalian DNA-binding metalloprotease that resolves DNA-protein crosslinks.</title>
        <authorList>
            <person name="Lopez-Mosqueda J."/>
            <person name="Maddi K."/>
            <person name="Prgomet S."/>
            <person name="Kalayil S."/>
            <person name="Marinovic-Terzic I."/>
            <person name="Terzic J."/>
            <person name="Dikic I."/>
        </authorList>
    </citation>
    <scope>FUNCTION</scope>
    <scope>CATALYTIC ACTIVITY</scope>
    <scope>ACTIVITY REGULATION</scope>
    <scope>SUBCELLULAR LOCATION</scope>
    <scope>COFACTOR</scope>
    <scope>PROTEOLYTIC CLEAVAGE</scope>
    <scope>ACTIVE SITE</scope>
    <scope>MUTAGENESIS OF GLU-112 AND 408-ARG--LEU-411</scope>
    <scope>CHARACTERIZATION OF VARIANT RJALS CYS-117</scope>
</reference>
<reference key="21">
    <citation type="journal article" date="2016" name="Mol. Cell">
        <title>Metalloprotease SPRTN/DVC1 orchestrates replication-coupled DNA-protein crosslink repair.</title>
        <authorList>
            <person name="Vaz B."/>
            <person name="Popovic M."/>
            <person name="Newman J.A."/>
            <person name="Fielden J."/>
            <person name="Aitkenhead H."/>
            <person name="Halder S."/>
            <person name="Singh A.N."/>
            <person name="Vendrell I."/>
            <person name="Fischer R."/>
            <person name="Torrecilla I."/>
            <person name="Drobnitzky N."/>
            <person name="Freire R."/>
            <person name="Amor D.J."/>
            <person name="Lockhart P.J."/>
            <person name="Kessler B.M."/>
            <person name="McKenna G.W."/>
            <person name="Gileadi O."/>
            <person name="Ramadan K."/>
        </authorList>
    </citation>
    <scope>FUNCTION</scope>
    <scope>CATALYTIC ACTIVITY</scope>
    <scope>ACTIVITY REGULATION</scope>
    <scope>SUBCELLULAR LOCATION</scope>
    <scope>PROTEOLYTIC CLEAVAGE</scope>
    <scope>ACTIVE SITE</scope>
    <scope>MUTAGENESIS OF GLU-112</scope>
    <scope>CHARACTERIZATION OF VARIANT RJALS CYS-117</scope>
</reference>
<reference key="22">
    <citation type="journal article" date="2016" name="Mol. Cell">
        <title>Mechanism and regulation of DNA-protein crosslink repair by the DNA-dependent metalloprotease SPRTN.</title>
        <authorList>
            <person name="Stingele J."/>
            <person name="Bellelli R."/>
            <person name="Alte F."/>
            <person name="Hewitt G."/>
            <person name="Sarek G."/>
            <person name="Maslen S.L."/>
            <person name="Tsutakawa S.E."/>
            <person name="Borg A."/>
            <person name="Kjaer S."/>
            <person name="Tainer J.A."/>
            <person name="Skehel J.M."/>
            <person name="Groll M."/>
            <person name="Boulton S.J."/>
        </authorList>
    </citation>
    <scope>FUNCTION</scope>
    <scope>CATALYTIC ACTIVITY</scope>
    <scope>ACTIVITY REGULATION</scope>
    <scope>SUBCELLULAR LOCATION</scope>
    <scope>PROTEOLYTIC CLEAVAGE</scope>
    <scope>UBIQUITINATION AT LYS-341; LYS-376; LYS-414 AND LYS-435</scope>
    <scope>ACTIVE SITE</scope>
    <scope>MUTAGENESIS OF GLU-112; LYS-341; LYS-376; LYS-414 AND LYS-435</scope>
    <scope>CHARACTERIZATION OF VARIANT RJALS CYS-117</scope>
</reference>
<reference key="23">
    <citation type="journal article" date="2019" name="Nat. Commun.">
        <title>SPRTN protease and checkpoint kinase 1 cross-activation loop safeguards DNA replication.</title>
        <authorList>
            <person name="Halder S."/>
            <person name="Torrecilla I."/>
            <person name="Burkhalter M.D."/>
            <person name="Popovic M."/>
            <person name="Fielden J."/>
            <person name="Vaz B."/>
            <person name="Oehler J."/>
            <person name="Pilger D."/>
            <person name="Lessel D."/>
            <person name="Wiseman K."/>
            <person name="Singh A.N."/>
            <person name="Vendrell I."/>
            <person name="Fischer R."/>
            <person name="Philipp M."/>
            <person name="Ramadan K."/>
        </authorList>
    </citation>
    <scope>FUNCTION</scope>
    <scope>SUBCELLULAR LOCATION</scope>
    <scope>PHOSPHORYLATION AT SER-373; SER-374 AND SER-383</scope>
    <scope>MUTAGENESIS OF GLU-112; SER-373; SER-374 AND SER-383</scope>
</reference>
<reference key="24">
    <citation type="journal article" date="2020" name="Mol. Cell">
        <title>Tandem deubiquitination and acetylation of SPRTN promotes DNA-protein crosslink repair and protects against aging.</title>
        <authorList>
            <person name="Huang J."/>
            <person name="Zhou Q."/>
            <person name="Gao M."/>
            <person name="Nowsheen S."/>
            <person name="Zhao F."/>
            <person name="Kim W."/>
            <person name="Zhu Q."/>
            <person name="Kojima Y."/>
            <person name="Yin P."/>
            <person name="Zhang Y."/>
            <person name="Guo G."/>
            <person name="Tu X."/>
            <person name="Deng M."/>
            <person name="Luo K."/>
            <person name="Qin B."/>
            <person name="Machida Y."/>
            <person name="Lou Z."/>
        </authorList>
    </citation>
    <scope>FUNCTION</scope>
    <scope>CATALYTIC ACTIVITY</scope>
    <scope>SUBCELLULAR LOCATION</scope>
    <scope>ACTIVITY REGULATION</scope>
    <scope>ACETYLATION AT LYS-230</scope>
    <scope>MUTAGENESIS OF LYS-230</scope>
</reference>
<reference key="25">
    <citation type="journal article" date="2020" name="Nat. Commun.">
        <title>TEX264 coordinates p97- and SPRTN-mediated resolution of topoisomerase 1-DNA adducts.</title>
        <authorList>
            <person name="Fielden J."/>
            <person name="Wiseman K."/>
            <person name="Torrecilla I."/>
            <person name="Li S."/>
            <person name="Hume S."/>
            <person name="Chiang S.C."/>
            <person name="Ruggiano A."/>
            <person name="Narayan Singh A."/>
            <person name="Freire R."/>
            <person name="Hassanieh S."/>
            <person name="Domingo E."/>
            <person name="Vendrell I."/>
            <person name="Fischer R."/>
            <person name="Kessler B.M."/>
            <person name="Maughan T.S."/>
            <person name="El-Khamisy S.F."/>
            <person name="Ramadan K."/>
        </authorList>
    </citation>
    <scope>FUNCTION</scope>
</reference>
<reference key="26">
    <citation type="journal article" date="2023" name="Mol. Cell">
        <title>The FANCJ helicase unfolds DNA-protein crosslinks to promote their repair.</title>
        <authorList>
            <person name="Yaneva D."/>
            <person name="Sparks J.L."/>
            <person name="Donsbach M."/>
            <person name="Zhao S."/>
            <person name="Weickert P."/>
            <person name="Bezalel-Buch R."/>
            <person name="Stingele J."/>
            <person name="Walter J.C."/>
        </authorList>
    </citation>
    <scope>FUNCTION</scope>
</reference>
<reference evidence="32" key="27">
    <citation type="journal article" date="2016" name="Biochem. Biophys. Res. Commun.">
        <title>Crystal structure of human PCNA in complex with the PIP box of DVC1.</title>
        <authorList>
            <person name="Wang Y."/>
            <person name="Xu M."/>
            <person name="Jiang T."/>
        </authorList>
    </citation>
    <scope>X-RAY CRYSTALLOGRAPHY (2.94 ANGSTROMS) OF 321-336 IN COMPLEX WITH PCNA</scope>
    <scope>DOMAIN</scope>
    <scope>INTERACTION WITH PCNA</scope>
    <scope>MUTAGENESIS OF ASN-326; 331-TYR-PHE-332; TYR-331 AND PHE-332</scope>
</reference>
<reference evidence="33 34" key="28">
    <citation type="journal article" date="2019" name="Cell Rep.">
        <title>Structural insight into DNA-dependent activation of human metalloprotease Spartan.</title>
        <authorList>
            <person name="Li F."/>
            <person name="Raczynska J.E."/>
            <person name="Chen Z."/>
            <person name="Yu H."/>
        </authorList>
    </citation>
    <scope>X-RAY CRYSTALLOGRAPHY (1.50 ANGSTROMS) OF 26-214 IN COMPLEX WITH ZINC AND DNA</scope>
    <scope>FUNCTION</scope>
    <scope>ACTIVITY REGULATION</scope>
    <scope>COFACTOR</scope>
    <scope>PROTEOLYTIC CLEAVAGE</scope>
    <scope>ACTIVE SITE</scope>
    <scope>MUTAGENESIS OF ARG-71; ARG-91; GLU-112; ILE-149; HIS-153; PHE-155; HIS-156; ASP-157; VAL-159; ARG-163; TYR-179; ARG-185; ARG-189; HIS-194; TRP-197 AND LYS-211</scope>
</reference>
<organism>
    <name type="scientific">Homo sapiens</name>
    <name type="common">Human</name>
    <dbReference type="NCBI Taxonomy" id="9606"/>
    <lineage>
        <taxon>Eukaryota</taxon>
        <taxon>Metazoa</taxon>
        <taxon>Chordata</taxon>
        <taxon>Craniata</taxon>
        <taxon>Vertebrata</taxon>
        <taxon>Euteleostomi</taxon>
        <taxon>Mammalia</taxon>
        <taxon>Eutheria</taxon>
        <taxon>Euarchontoglires</taxon>
        <taxon>Primates</taxon>
        <taxon>Haplorrhini</taxon>
        <taxon>Catarrhini</taxon>
        <taxon>Hominidae</taxon>
        <taxon>Homo</taxon>
    </lineage>
</organism>
<sequence length="489" mass="55134">MDDDLMLALRLQEEWNLQEAERDHAQESLSLVDASWELVDPTPDLQALFVQFNDQFFWGQLEAVEVKWSVRMTLCAGICSYEGKGGMCSIRLSEPLLKLRPRKDLVETLLHEMIHAYLFVTNNDKDREGHGPEFCKHMHRINSLTGANITVYHTFHDEVDEYRRHWWRCNGPCQHRPPYYGYVKRATNREPSAHDYWWAEHQKTCGGTYIKIKEPENYSKKGKGKAKLGKEPVLAAENKDKPNRGEAQLVIPFSGKGYVLGETSNLPSPGKLITSHAINKTQDLLNQNHSANAVRPNSKIKVKFEQNGSSKNSHLVSPAVSNSHQNVLSNYFPRVSFANQKAFRGVNGSPRISVTVGNIPKNSVSSSSQRRVSSSKISLRNSSKVTESASVMPSQDVSGSEDTFPNKRPRLEDKTVFDNFFIKKEQIKSSGNDPKYSTTTAQNSSSSSSQSKMVNCPVCQNEVLESQINEHLDWCLEGDSIKVKSEESL</sequence>
<dbReference type="EC" id="3.4.24.-" evidence="17 18 19 23"/>
<dbReference type="EMBL" id="AY358611">
    <property type="protein sequence ID" value="AAQ88974.1"/>
    <property type="molecule type" value="mRNA"/>
</dbReference>
<dbReference type="EMBL" id="AK027613">
    <property type="protein sequence ID" value="BAB55232.1"/>
    <property type="molecule type" value="mRNA"/>
</dbReference>
<dbReference type="EMBL" id="AK027317">
    <property type="protein sequence ID" value="BAB55037.1"/>
    <property type="status" value="ALT_FRAME"/>
    <property type="molecule type" value="mRNA"/>
</dbReference>
<dbReference type="EMBL" id="AL512744">
    <property type="protein sequence ID" value="CAC21670.1"/>
    <property type="molecule type" value="mRNA"/>
</dbReference>
<dbReference type="EMBL" id="AL117352">
    <property type="status" value="NOT_ANNOTATED_CDS"/>
    <property type="molecule type" value="Genomic_DNA"/>
</dbReference>
<dbReference type="EMBL" id="CH471098">
    <property type="protein sequence ID" value="EAW69956.1"/>
    <property type="molecule type" value="Genomic_DNA"/>
</dbReference>
<dbReference type="EMBL" id="BC015740">
    <property type="protein sequence ID" value="AAH15740.1"/>
    <property type="molecule type" value="mRNA"/>
</dbReference>
<dbReference type="EMBL" id="BC068478">
    <property type="protein sequence ID" value="AAH68478.1"/>
    <property type="molecule type" value="mRNA"/>
</dbReference>
<dbReference type="CCDS" id="CCDS1594.1">
    <molecule id="Q9H040-1"/>
</dbReference>
<dbReference type="CCDS" id="CCDS31054.1">
    <molecule id="Q9H040-2"/>
</dbReference>
<dbReference type="CCDS" id="CCDS58066.1">
    <molecule id="Q9H040-3"/>
</dbReference>
<dbReference type="RefSeq" id="NP_001010984.1">
    <molecule id="Q9H040-2"/>
    <property type="nucleotide sequence ID" value="NM_001010984.4"/>
</dbReference>
<dbReference type="RefSeq" id="NP_001248391.1">
    <molecule id="Q9H040-3"/>
    <property type="nucleotide sequence ID" value="NM_001261462.3"/>
</dbReference>
<dbReference type="RefSeq" id="NP_114407.3">
    <molecule id="Q9H040-1"/>
    <property type="nucleotide sequence ID" value="NM_032018.6"/>
</dbReference>
<dbReference type="PDB" id="5IY4">
    <property type="method" value="X-ray"/>
    <property type="resolution" value="2.94 A"/>
    <property type="chains" value="B/D/F=321-336"/>
</dbReference>
<dbReference type="PDB" id="6MDW">
    <property type="method" value="X-ray"/>
    <property type="resolution" value="1.50 A"/>
    <property type="chains" value="A=26-214"/>
</dbReference>
<dbReference type="PDB" id="6MDX">
    <property type="method" value="X-ray"/>
    <property type="resolution" value="1.55 A"/>
    <property type="chains" value="A=28-214"/>
</dbReference>
<dbReference type="PDBsum" id="5IY4"/>
<dbReference type="PDBsum" id="6MDW"/>
<dbReference type="PDBsum" id="6MDX"/>
<dbReference type="SMR" id="Q9H040"/>
<dbReference type="BioGRID" id="123817">
    <property type="interactions" value="597"/>
</dbReference>
<dbReference type="FunCoup" id="Q9H040">
    <property type="interactions" value="3244"/>
</dbReference>
<dbReference type="IntAct" id="Q9H040">
    <property type="interactions" value="34"/>
</dbReference>
<dbReference type="STRING" id="9606.ENSP00000295050"/>
<dbReference type="GlyGen" id="Q9H040">
    <property type="glycosylation" value="2 sites"/>
</dbReference>
<dbReference type="iPTMnet" id="Q9H040"/>
<dbReference type="PhosphoSitePlus" id="Q9H040"/>
<dbReference type="BioMuta" id="SPRTN"/>
<dbReference type="DMDM" id="162416221"/>
<dbReference type="jPOST" id="Q9H040"/>
<dbReference type="MassIVE" id="Q9H040"/>
<dbReference type="PaxDb" id="9606-ENSP00000295050"/>
<dbReference type="PeptideAtlas" id="Q9H040"/>
<dbReference type="ProteomicsDB" id="3103"/>
<dbReference type="ProteomicsDB" id="80202">
    <molecule id="Q9H040-1"/>
</dbReference>
<dbReference type="ProteomicsDB" id="80203">
    <molecule id="Q9H040-2"/>
</dbReference>
<dbReference type="Pumba" id="Q9H040"/>
<dbReference type="ABCD" id="Q9H040">
    <property type="antibodies" value="1 sequenced antibody"/>
</dbReference>
<dbReference type="Antibodypedia" id="20798">
    <property type="antibodies" value="127 antibodies from 20 providers"/>
</dbReference>
<dbReference type="DNASU" id="83932"/>
<dbReference type="Ensembl" id="ENST00000008440.9">
    <molecule id="Q9H040-3"/>
    <property type="protein sequence ID" value="ENSP00000008440.9"/>
    <property type="gene ID" value="ENSG00000010072.16"/>
</dbReference>
<dbReference type="Ensembl" id="ENST00000295050.12">
    <molecule id="Q9H040-1"/>
    <property type="protein sequence ID" value="ENSP00000295050.7"/>
    <property type="gene ID" value="ENSG00000010072.16"/>
</dbReference>
<dbReference type="Ensembl" id="ENST00000391858.8">
    <molecule id="Q9H040-2"/>
    <property type="protein sequence ID" value="ENSP00000375731.4"/>
    <property type="gene ID" value="ENSG00000010072.16"/>
</dbReference>
<dbReference type="GeneID" id="83932"/>
<dbReference type="KEGG" id="hsa:83932"/>
<dbReference type="MANE-Select" id="ENST00000295050.12">
    <property type="protein sequence ID" value="ENSP00000295050.7"/>
    <property type="RefSeq nucleotide sequence ID" value="NM_032018.7"/>
    <property type="RefSeq protein sequence ID" value="NP_114407.3"/>
</dbReference>
<dbReference type="UCSC" id="uc001hur.5">
    <molecule id="Q9H040-1"/>
    <property type="organism name" value="human"/>
</dbReference>
<dbReference type="AGR" id="HGNC:25356"/>
<dbReference type="CTD" id="83932"/>
<dbReference type="DisGeNET" id="83932"/>
<dbReference type="GeneCards" id="SPRTN"/>
<dbReference type="HGNC" id="HGNC:25356">
    <property type="gene designation" value="SPRTN"/>
</dbReference>
<dbReference type="HPA" id="ENSG00000010072">
    <property type="expression patterns" value="Low tissue specificity"/>
</dbReference>
<dbReference type="MalaCards" id="SPRTN"/>
<dbReference type="MIM" id="616086">
    <property type="type" value="gene"/>
</dbReference>
<dbReference type="MIM" id="616200">
    <property type="type" value="phenotype"/>
</dbReference>
<dbReference type="neXtProt" id="NX_Q9H040"/>
<dbReference type="OpenTargets" id="ENSG00000010072"/>
<dbReference type="Orphanet" id="435953">
    <property type="disease" value="Progeroid features-hepatocellular carcinoma predisposition syndrome"/>
</dbReference>
<dbReference type="PharmGKB" id="PA142672442"/>
<dbReference type="VEuPathDB" id="HostDB:ENSG00000010072"/>
<dbReference type="eggNOG" id="KOG3931">
    <property type="taxonomic scope" value="Eukaryota"/>
</dbReference>
<dbReference type="GeneTree" id="ENSGT00390000003585"/>
<dbReference type="HOGENOM" id="CLU_083493_0_0_1"/>
<dbReference type="InParanoid" id="Q9H040"/>
<dbReference type="OMA" id="VCQTEVL"/>
<dbReference type="OrthoDB" id="5236983at2759"/>
<dbReference type="PAN-GO" id="Q9H040">
    <property type="GO annotations" value="3 GO annotations based on evolutionary models"/>
</dbReference>
<dbReference type="PhylomeDB" id="Q9H040"/>
<dbReference type="TreeFam" id="TF314762"/>
<dbReference type="PathwayCommons" id="Q9H040"/>
<dbReference type="Reactome" id="R-HSA-110320">
    <property type="pathway name" value="Translesion Synthesis by POLH"/>
</dbReference>
<dbReference type="SignaLink" id="Q9H040"/>
<dbReference type="BioGRID-ORCS" id="83932">
    <property type="hits" value="602 hits in 1078 CRISPR screens"/>
</dbReference>
<dbReference type="ChiTaRS" id="SPRTN">
    <property type="organism name" value="human"/>
</dbReference>
<dbReference type="GeneWiki" id="C1orf124"/>
<dbReference type="GenomeRNAi" id="83932"/>
<dbReference type="Pharos" id="Q9H040">
    <property type="development level" value="Tbio"/>
</dbReference>
<dbReference type="PRO" id="PR:Q9H040"/>
<dbReference type="Proteomes" id="UP000005640">
    <property type="component" value="Chromosome 1"/>
</dbReference>
<dbReference type="RNAct" id="Q9H040">
    <property type="molecule type" value="protein"/>
</dbReference>
<dbReference type="Bgee" id="ENSG00000010072">
    <property type="expression patterns" value="Expressed in oocyte and 158 other cell types or tissues"/>
</dbReference>
<dbReference type="ExpressionAtlas" id="Q9H040">
    <property type="expression patterns" value="baseline and differential"/>
</dbReference>
<dbReference type="GO" id="GO:0000785">
    <property type="term" value="C:chromatin"/>
    <property type="evidence" value="ECO:0000314"/>
    <property type="project" value="UniProtKB"/>
</dbReference>
<dbReference type="GO" id="GO:0016607">
    <property type="term" value="C:nuclear speck"/>
    <property type="evidence" value="ECO:0000314"/>
    <property type="project" value="LIFEdb"/>
</dbReference>
<dbReference type="GO" id="GO:0005654">
    <property type="term" value="C:nucleoplasm"/>
    <property type="evidence" value="ECO:0000314"/>
    <property type="project" value="HPA"/>
</dbReference>
<dbReference type="GO" id="GO:0005634">
    <property type="term" value="C:nucleus"/>
    <property type="evidence" value="ECO:0000314"/>
    <property type="project" value="UniProtKB"/>
</dbReference>
<dbReference type="GO" id="GO:0003690">
    <property type="term" value="F:double-stranded DNA binding"/>
    <property type="evidence" value="ECO:0000314"/>
    <property type="project" value="UniProtKB"/>
</dbReference>
<dbReference type="GO" id="GO:0070530">
    <property type="term" value="F:K63-linked polyubiquitin modification-dependent protein binding"/>
    <property type="evidence" value="ECO:0000314"/>
    <property type="project" value="UniProtKB"/>
</dbReference>
<dbReference type="GO" id="GO:0004222">
    <property type="term" value="F:metalloendopeptidase activity"/>
    <property type="evidence" value="ECO:0000314"/>
    <property type="project" value="UniProtKB"/>
</dbReference>
<dbReference type="GO" id="GO:0031593">
    <property type="term" value="F:polyubiquitin modification-dependent protein binding"/>
    <property type="evidence" value="ECO:0000318"/>
    <property type="project" value="GO_Central"/>
</dbReference>
<dbReference type="GO" id="GO:0003697">
    <property type="term" value="F:single-stranded DNA binding"/>
    <property type="evidence" value="ECO:0000314"/>
    <property type="project" value="UniProtKB"/>
</dbReference>
<dbReference type="GO" id="GO:0043130">
    <property type="term" value="F:ubiquitin binding"/>
    <property type="evidence" value="ECO:0000314"/>
    <property type="project" value="UniProtKB"/>
</dbReference>
<dbReference type="GO" id="GO:0008270">
    <property type="term" value="F:zinc ion binding"/>
    <property type="evidence" value="ECO:0007669"/>
    <property type="project" value="UniProtKB-KW"/>
</dbReference>
<dbReference type="GO" id="GO:0006974">
    <property type="term" value="P:DNA damage response"/>
    <property type="evidence" value="ECO:0000314"/>
    <property type="project" value="UniProtKB"/>
</dbReference>
<dbReference type="GO" id="GO:0036297">
    <property type="term" value="P:interstrand cross-link repair"/>
    <property type="evidence" value="ECO:0000314"/>
    <property type="project" value="UniProt"/>
</dbReference>
<dbReference type="GO" id="GO:0031398">
    <property type="term" value="P:positive regulation of protein ubiquitination"/>
    <property type="evidence" value="ECO:0000314"/>
    <property type="project" value="UniProtKB"/>
</dbReference>
<dbReference type="GO" id="GO:0016540">
    <property type="term" value="P:protein autoprocessing"/>
    <property type="evidence" value="ECO:0000314"/>
    <property type="project" value="UniProtKB"/>
</dbReference>
<dbReference type="GO" id="GO:0106300">
    <property type="term" value="P:protein-DNA covalent cross-linking repair"/>
    <property type="evidence" value="ECO:0000314"/>
    <property type="project" value="UniProtKB"/>
</dbReference>
<dbReference type="GO" id="GO:0006508">
    <property type="term" value="P:proteolysis"/>
    <property type="evidence" value="ECO:0000314"/>
    <property type="project" value="UniProtKB"/>
</dbReference>
<dbReference type="GO" id="GO:0009411">
    <property type="term" value="P:response to UV"/>
    <property type="evidence" value="ECO:0000314"/>
    <property type="project" value="UniProtKB"/>
</dbReference>
<dbReference type="GO" id="GO:0019985">
    <property type="term" value="P:translesion synthesis"/>
    <property type="evidence" value="ECO:0000314"/>
    <property type="project" value="UniProtKB"/>
</dbReference>
<dbReference type="FunFam" id="3.30.160.60:FF:000331">
    <property type="entry name" value="E3 ubiquitin-protein ligase RAD18"/>
    <property type="match status" value="1"/>
</dbReference>
<dbReference type="Gene3D" id="3.30.160.60">
    <property type="entry name" value="Classic Zinc Finger"/>
    <property type="match status" value="1"/>
</dbReference>
<dbReference type="InterPro" id="IPR006642">
    <property type="entry name" value="Rad18_UBZ4"/>
</dbReference>
<dbReference type="InterPro" id="IPR044245">
    <property type="entry name" value="Spartan"/>
</dbReference>
<dbReference type="InterPro" id="IPR006640">
    <property type="entry name" value="SprT-like_domain"/>
</dbReference>
<dbReference type="InterPro" id="IPR055220">
    <property type="entry name" value="SPRTN_ZBD"/>
</dbReference>
<dbReference type="PANTHER" id="PTHR21220">
    <property type="entry name" value="DNA-DEPENDENT METALLOPROTEASE SPRTN"/>
    <property type="match status" value="1"/>
</dbReference>
<dbReference type="PANTHER" id="PTHR21220:SF0">
    <property type="entry name" value="DNA-DEPENDENT METALLOPROTEASE SPRTN"/>
    <property type="match status" value="1"/>
</dbReference>
<dbReference type="Pfam" id="PF10263">
    <property type="entry name" value="SprT-like"/>
    <property type="match status" value="1"/>
</dbReference>
<dbReference type="Pfam" id="PF22934">
    <property type="entry name" value="SPRTN_ZBD"/>
    <property type="match status" value="1"/>
</dbReference>
<dbReference type="SMART" id="SM00731">
    <property type="entry name" value="SprT"/>
    <property type="match status" value="1"/>
</dbReference>
<dbReference type="SMART" id="SM00734">
    <property type="entry name" value="ZnF_Rad18"/>
    <property type="match status" value="1"/>
</dbReference>
<dbReference type="PROSITE" id="PS51908">
    <property type="entry name" value="ZF_UBZ4"/>
    <property type="match status" value="1"/>
</dbReference>
<dbReference type="PROSITE" id="PS00142">
    <property type="entry name" value="ZINC_PROTEASE"/>
    <property type="match status" value="1"/>
</dbReference>
<proteinExistence type="evidence at protein level"/>